<sequence>MASKGKVTQVIGAVVDVQFEDGLPAILNALETTNNGKRLVLEVAQHLGENTVRTIAMDATEGLVRGAAVSDTGGPITVPVGNATLGRILNVIGEPVDERGDVSKAEARAIHQPAPDFAAQSTESQILVTGIKVIDLLAPYSKGGKIGLFGGAGVGKTVLIMELINNIAKVHSGFSVFAGVGERTREGNDLYHEMIESGVINLEKLEESKVALVYGQMNEPPGARARVALTGLTLAEQFRDQSGTDVLFFVDNIFRFTQAGSEVSALLGRIPSAVGYQPTLATDMGALQERITSTKAGSITSVQAIYVPADDLTDPAPATSFAHLDATTVLSRAISELGIYPAVDPLDSTSRILDPQVVGEEHYQVARDVQGMLQRYKSLQDIIAILGMDELSEEDKLTVARARKIQRFLSQPFDVAKVFTGSDGVQVPLEDTIKSFKAVVAGEYDHLPEAAFYMVGGIDDVIAKAQRLAAAA</sequence>
<accession>P72247</accession>
<protein>
    <recommendedName>
        <fullName evidence="1">ATP synthase subunit beta</fullName>
        <ecNumber evidence="1">7.1.2.2</ecNumber>
    </recommendedName>
    <alternativeName>
        <fullName evidence="1">ATP synthase F1 sector subunit beta</fullName>
    </alternativeName>
    <alternativeName>
        <fullName evidence="1">F-ATPase subunit beta</fullName>
    </alternativeName>
</protein>
<evidence type="ECO:0000255" key="1">
    <source>
        <dbReference type="HAMAP-Rule" id="MF_01347"/>
    </source>
</evidence>
<evidence type="ECO:0000269" key="2">
    <source ref="2"/>
</evidence>
<evidence type="ECO:0000305" key="3"/>
<dbReference type="EC" id="7.1.2.2" evidence="1"/>
<dbReference type="EMBL" id="X99599">
    <property type="protein sequence ID" value="CAA67910.1"/>
    <property type="molecule type" value="Genomic_DNA"/>
</dbReference>
<dbReference type="RefSeq" id="WP_013068671.1">
    <property type="nucleotide sequence ID" value="NZ_VIBE01000018.1"/>
</dbReference>
<dbReference type="SMR" id="P72247"/>
<dbReference type="GeneID" id="31491766"/>
<dbReference type="OMA" id="SMEEGGW"/>
<dbReference type="GO" id="GO:0005886">
    <property type="term" value="C:plasma membrane"/>
    <property type="evidence" value="ECO:0007669"/>
    <property type="project" value="UniProtKB-UniRule"/>
</dbReference>
<dbReference type="GO" id="GO:0042717">
    <property type="term" value="C:plasma membrane-derived chromatophore membrane"/>
    <property type="evidence" value="ECO:0007669"/>
    <property type="project" value="UniProtKB-SubCell"/>
</dbReference>
<dbReference type="GO" id="GO:0045259">
    <property type="term" value="C:proton-transporting ATP synthase complex"/>
    <property type="evidence" value="ECO:0007669"/>
    <property type="project" value="UniProtKB-KW"/>
</dbReference>
<dbReference type="GO" id="GO:0005524">
    <property type="term" value="F:ATP binding"/>
    <property type="evidence" value="ECO:0007669"/>
    <property type="project" value="UniProtKB-UniRule"/>
</dbReference>
<dbReference type="GO" id="GO:0016887">
    <property type="term" value="F:ATP hydrolysis activity"/>
    <property type="evidence" value="ECO:0007669"/>
    <property type="project" value="InterPro"/>
</dbReference>
<dbReference type="GO" id="GO:0046933">
    <property type="term" value="F:proton-transporting ATP synthase activity, rotational mechanism"/>
    <property type="evidence" value="ECO:0007669"/>
    <property type="project" value="UniProtKB-UniRule"/>
</dbReference>
<dbReference type="CDD" id="cd18110">
    <property type="entry name" value="ATP-synt_F1_beta_C"/>
    <property type="match status" value="1"/>
</dbReference>
<dbReference type="CDD" id="cd18115">
    <property type="entry name" value="ATP-synt_F1_beta_N"/>
    <property type="match status" value="1"/>
</dbReference>
<dbReference type="CDD" id="cd01133">
    <property type="entry name" value="F1-ATPase_beta_CD"/>
    <property type="match status" value="1"/>
</dbReference>
<dbReference type="FunFam" id="1.10.1140.10:FF:000001">
    <property type="entry name" value="ATP synthase subunit beta"/>
    <property type="match status" value="1"/>
</dbReference>
<dbReference type="FunFam" id="2.40.10.170:FF:000004">
    <property type="entry name" value="ATP synthase subunit beta"/>
    <property type="match status" value="1"/>
</dbReference>
<dbReference type="FunFam" id="3.40.50.300:FF:000026">
    <property type="entry name" value="ATP synthase subunit beta"/>
    <property type="match status" value="1"/>
</dbReference>
<dbReference type="Gene3D" id="2.40.10.170">
    <property type="match status" value="1"/>
</dbReference>
<dbReference type="Gene3D" id="1.10.1140.10">
    <property type="entry name" value="Bovine Mitochondrial F1-atpase, Atp Synthase Beta Chain, Chain D, domain 3"/>
    <property type="match status" value="1"/>
</dbReference>
<dbReference type="Gene3D" id="3.40.50.300">
    <property type="entry name" value="P-loop containing nucleotide triphosphate hydrolases"/>
    <property type="match status" value="1"/>
</dbReference>
<dbReference type="HAMAP" id="MF_01347">
    <property type="entry name" value="ATP_synth_beta_bact"/>
    <property type="match status" value="1"/>
</dbReference>
<dbReference type="InterPro" id="IPR003593">
    <property type="entry name" value="AAA+_ATPase"/>
</dbReference>
<dbReference type="InterPro" id="IPR055190">
    <property type="entry name" value="ATP-synt_VA_C"/>
</dbReference>
<dbReference type="InterPro" id="IPR005722">
    <property type="entry name" value="ATP_synth_F1_bsu"/>
</dbReference>
<dbReference type="InterPro" id="IPR020003">
    <property type="entry name" value="ATPase_a/bsu_AS"/>
</dbReference>
<dbReference type="InterPro" id="IPR050053">
    <property type="entry name" value="ATPase_alpha/beta_chains"/>
</dbReference>
<dbReference type="InterPro" id="IPR004100">
    <property type="entry name" value="ATPase_F1/V1/A1_a/bsu_N"/>
</dbReference>
<dbReference type="InterPro" id="IPR036121">
    <property type="entry name" value="ATPase_F1/V1/A1_a/bsu_N_sf"/>
</dbReference>
<dbReference type="InterPro" id="IPR000194">
    <property type="entry name" value="ATPase_F1/V1/A1_a/bsu_nucl-bd"/>
</dbReference>
<dbReference type="InterPro" id="IPR024034">
    <property type="entry name" value="ATPase_F1/V1_b/a_C"/>
</dbReference>
<dbReference type="InterPro" id="IPR027417">
    <property type="entry name" value="P-loop_NTPase"/>
</dbReference>
<dbReference type="NCBIfam" id="TIGR01039">
    <property type="entry name" value="atpD"/>
    <property type="match status" value="1"/>
</dbReference>
<dbReference type="PANTHER" id="PTHR15184">
    <property type="entry name" value="ATP SYNTHASE"/>
    <property type="match status" value="1"/>
</dbReference>
<dbReference type="PANTHER" id="PTHR15184:SF71">
    <property type="entry name" value="ATP SYNTHASE SUBUNIT BETA, MITOCHONDRIAL"/>
    <property type="match status" value="1"/>
</dbReference>
<dbReference type="Pfam" id="PF00006">
    <property type="entry name" value="ATP-synt_ab"/>
    <property type="match status" value="1"/>
</dbReference>
<dbReference type="Pfam" id="PF02874">
    <property type="entry name" value="ATP-synt_ab_N"/>
    <property type="match status" value="1"/>
</dbReference>
<dbReference type="Pfam" id="PF22919">
    <property type="entry name" value="ATP-synt_VA_C"/>
    <property type="match status" value="1"/>
</dbReference>
<dbReference type="PIRSF" id="PIRSF039072">
    <property type="entry name" value="ATPase_subunit_beta"/>
    <property type="match status" value="1"/>
</dbReference>
<dbReference type="SMART" id="SM00382">
    <property type="entry name" value="AAA"/>
    <property type="match status" value="1"/>
</dbReference>
<dbReference type="SUPFAM" id="SSF47917">
    <property type="entry name" value="C-terminal domain of alpha and beta subunits of F1 ATP synthase"/>
    <property type="match status" value="1"/>
</dbReference>
<dbReference type="SUPFAM" id="SSF50615">
    <property type="entry name" value="N-terminal domain of alpha and beta subunits of F1 ATP synthase"/>
    <property type="match status" value="1"/>
</dbReference>
<dbReference type="SUPFAM" id="SSF52540">
    <property type="entry name" value="P-loop containing nucleoside triphosphate hydrolases"/>
    <property type="match status" value="1"/>
</dbReference>
<dbReference type="PROSITE" id="PS00152">
    <property type="entry name" value="ATPASE_ALPHA_BETA"/>
    <property type="match status" value="1"/>
</dbReference>
<keyword id="KW-0066">ATP synthesis</keyword>
<keyword id="KW-0067">ATP-binding</keyword>
<keyword id="KW-0139">CF(1)</keyword>
<keyword id="KW-0903">Direct protein sequencing</keyword>
<keyword id="KW-0375">Hydrogen ion transport</keyword>
<keyword id="KW-0406">Ion transport</keyword>
<keyword id="KW-0472">Membrane</keyword>
<keyword id="KW-0547">Nucleotide-binding</keyword>
<keyword id="KW-1278">Translocase</keyword>
<keyword id="KW-0813">Transport</keyword>
<feature type="initiator methionine" description="Removed" evidence="2">
    <location>
        <position position="1"/>
    </location>
</feature>
<feature type="chain" id="PRO_0000144464" description="ATP synthase subunit beta">
    <location>
        <begin position="2"/>
        <end position="472"/>
    </location>
</feature>
<feature type="binding site" evidence="1">
    <location>
        <begin position="150"/>
        <end position="157"/>
    </location>
    <ligand>
        <name>ATP</name>
        <dbReference type="ChEBI" id="CHEBI:30616"/>
    </ligand>
</feature>
<feature type="sequence conflict" description="In Ref. 2; AA sequence." evidence="3" ref="2">
    <original>A</original>
    <variation>L</variation>
    <location>
        <position position="2"/>
    </location>
</feature>
<gene>
    <name evidence="1" type="primary">atpD</name>
</gene>
<name>ATPB_RHOCA</name>
<reference key="1">
    <citation type="journal article" date="1998" name="J. Bacteriol.">
        <title>The ATP synthase atpHAGDC (F1) operon from Rhodobacter capsulatus.</title>
        <authorList>
            <person name="Borghese R."/>
            <person name="Crimi M."/>
            <person name="Fava L."/>
            <person name="Melandri B.A."/>
        </authorList>
    </citation>
    <scope>NUCLEOTIDE SEQUENCE [GENOMIC DNA]</scope>
    <source>
        <strain>ATCC 33303 / B10</strain>
    </source>
</reference>
<reference key="2">
    <citation type="journal article" date="1988" name="Biochim. Biophys. Acta">
        <title>Purification of the H+-ATPase from Rhodobacter capsulatus, identification of the F1F0 components and reconstitution of the active enzyme.</title>
        <authorList>
            <person name="Gabellini N."/>
            <person name="Gao Z."/>
            <person name="Eckerskorn C."/>
            <person name="Lottspeich F."/>
            <person name="Oesterhelt D."/>
        </authorList>
    </citation>
    <scope>PROTEIN SEQUENCE OF 2-19</scope>
    <scope>SUBUNIT</scope>
    <scope>SUBCELLULAR LOCATION</scope>
    <source>
        <strain>GA</strain>
    </source>
</reference>
<comment type="function">
    <text evidence="1">Produces ATP from ADP in the presence of a proton gradient across the membrane. The catalytic sites are hosted primarily by the beta subunits.</text>
</comment>
<comment type="catalytic activity">
    <reaction evidence="1">
        <text>ATP + H2O + 4 H(+)(in) = ADP + phosphate + 5 H(+)(out)</text>
        <dbReference type="Rhea" id="RHEA:57720"/>
        <dbReference type="ChEBI" id="CHEBI:15377"/>
        <dbReference type="ChEBI" id="CHEBI:15378"/>
        <dbReference type="ChEBI" id="CHEBI:30616"/>
        <dbReference type="ChEBI" id="CHEBI:43474"/>
        <dbReference type="ChEBI" id="CHEBI:456216"/>
        <dbReference type="EC" id="7.1.2.2"/>
    </reaction>
</comment>
<comment type="subunit">
    <text evidence="2">F-type ATPases have 2 components, CF(1) - the catalytic core - and CF(0) - the membrane proton channel. CF(1) has five subunits: alpha(3), beta(3), gamma(1), delta(1), epsilon(1). CF(0) has four main subunits: a, b, b' and c.</text>
</comment>
<comment type="subcellular location">
    <subcellularLocation>
        <location evidence="2">Cellular chromatophore membrane</location>
        <topology evidence="1 2">Peripheral membrane protein</topology>
    </subcellularLocation>
</comment>
<comment type="similarity">
    <text evidence="1">Belongs to the ATPase alpha/beta chains family.</text>
</comment>
<organism>
    <name type="scientific">Rhodobacter capsulatus</name>
    <name type="common">Rhodopseudomonas capsulata</name>
    <dbReference type="NCBI Taxonomy" id="1061"/>
    <lineage>
        <taxon>Bacteria</taxon>
        <taxon>Pseudomonadati</taxon>
        <taxon>Pseudomonadota</taxon>
        <taxon>Alphaproteobacteria</taxon>
        <taxon>Rhodobacterales</taxon>
        <taxon>Rhodobacter group</taxon>
        <taxon>Rhodobacter</taxon>
    </lineage>
</organism>
<proteinExistence type="evidence at protein level"/>